<gene>
    <name evidence="1" type="primary">eno</name>
    <name type="ordered locus">BB_0337</name>
</gene>
<organism>
    <name type="scientific">Borreliella burgdorferi (strain ATCC 35210 / DSM 4680 / CIP 102532 / B31)</name>
    <name type="common">Borrelia burgdorferi</name>
    <dbReference type="NCBI Taxonomy" id="224326"/>
    <lineage>
        <taxon>Bacteria</taxon>
        <taxon>Pseudomonadati</taxon>
        <taxon>Spirochaetota</taxon>
        <taxon>Spirochaetia</taxon>
        <taxon>Spirochaetales</taxon>
        <taxon>Borreliaceae</taxon>
        <taxon>Borreliella</taxon>
    </lineage>
</organism>
<feature type="chain" id="PRO_0000133848" description="Enolase">
    <location>
        <begin position="1"/>
        <end position="433"/>
    </location>
</feature>
<feature type="active site" description="Proton donor" evidence="1">
    <location>
        <position position="206"/>
    </location>
</feature>
<feature type="active site" description="Proton acceptor" evidence="1">
    <location>
        <position position="341"/>
    </location>
</feature>
<feature type="binding site" evidence="1">
    <location>
        <position position="164"/>
    </location>
    <ligand>
        <name>(2R)-2-phosphoglycerate</name>
        <dbReference type="ChEBI" id="CHEBI:58289"/>
    </ligand>
</feature>
<feature type="binding site" evidence="1">
    <location>
        <position position="243"/>
    </location>
    <ligand>
        <name>Mg(2+)</name>
        <dbReference type="ChEBI" id="CHEBI:18420"/>
    </ligand>
</feature>
<feature type="binding site" evidence="1">
    <location>
        <position position="289"/>
    </location>
    <ligand>
        <name>Mg(2+)</name>
        <dbReference type="ChEBI" id="CHEBI:18420"/>
    </ligand>
</feature>
<feature type="binding site" evidence="1">
    <location>
        <position position="316"/>
    </location>
    <ligand>
        <name>Mg(2+)</name>
        <dbReference type="ChEBI" id="CHEBI:18420"/>
    </ligand>
</feature>
<feature type="binding site" evidence="1">
    <location>
        <position position="341"/>
    </location>
    <ligand>
        <name>(2R)-2-phosphoglycerate</name>
        <dbReference type="ChEBI" id="CHEBI:58289"/>
    </ligand>
</feature>
<feature type="binding site" evidence="1">
    <location>
        <position position="370"/>
    </location>
    <ligand>
        <name>(2R)-2-phosphoglycerate</name>
        <dbReference type="ChEBI" id="CHEBI:58289"/>
    </ligand>
</feature>
<feature type="binding site" evidence="1">
    <location>
        <position position="371"/>
    </location>
    <ligand>
        <name>(2R)-2-phosphoglycerate</name>
        <dbReference type="ChEBI" id="CHEBI:58289"/>
    </ligand>
</feature>
<feature type="binding site" evidence="1">
    <location>
        <position position="392"/>
    </location>
    <ligand>
        <name>(2R)-2-phosphoglycerate</name>
        <dbReference type="ChEBI" id="CHEBI:58289"/>
    </ligand>
</feature>
<feature type="sequence conflict" description="In Ref. 2; AAC46289." evidence="2" ref="2">
    <original>I</original>
    <variation>T</variation>
    <location>
        <position position="391"/>
    </location>
</feature>
<dbReference type="EC" id="4.2.1.11" evidence="1"/>
<dbReference type="EMBL" id="AE000783">
    <property type="protein sequence ID" value="AAC66719.1"/>
    <property type="molecule type" value="Genomic_DNA"/>
</dbReference>
<dbReference type="EMBL" id="AF000366">
    <property type="protein sequence ID" value="AAC46289.1"/>
    <property type="molecule type" value="Genomic_DNA"/>
</dbReference>
<dbReference type="PIR" id="H70141">
    <property type="entry name" value="H70141"/>
</dbReference>
<dbReference type="RefSeq" id="NP_212471.1">
    <property type="nucleotide sequence ID" value="NC_001318.1"/>
</dbReference>
<dbReference type="RefSeq" id="WP_010889730.1">
    <property type="nucleotide sequence ID" value="NC_001318.1"/>
</dbReference>
<dbReference type="SMR" id="O51312"/>
<dbReference type="STRING" id="224326.BB_0337"/>
<dbReference type="PaxDb" id="224326-BB_0337"/>
<dbReference type="EnsemblBacteria" id="AAC66719">
    <property type="protein sequence ID" value="AAC66719"/>
    <property type="gene ID" value="BB_0337"/>
</dbReference>
<dbReference type="KEGG" id="bbu:BB_0337"/>
<dbReference type="PATRIC" id="fig|224326.49.peg.733"/>
<dbReference type="HOGENOM" id="CLU_031223_2_1_12"/>
<dbReference type="OrthoDB" id="9804716at2"/>
<dbReference type="UniPathway" id="UPA00109">
    <property type="reaction ID" value="UER00187"/>
</dbReference>
<dbReference type="Proteomes" id="UP000001807">
    <property type="component" value="Chromosome"/>
</dbReference>
<dbReference type="GO" id="GO:0009986">
    <property type="term" value="C:cell surface"/>
    <property type="evidence" value="ECO:0007669"/>
    <property type="project" value="UniProtKB-SubCell"/>
</dbReference>
<dbReference type="GO" id="GO:0005829">
    <property type="term" value="C:cytosol"/>
    <property type="evidence" value="ECO:0000314"/>
    <property type="project" value="CAFA"/>
</dbReference>
<dbReference type="GO" id="GO:0031240">
    <property type="term" value="C:external side of cell outer membrane"/>
    <property type="evidence" value="ECO:0000314"/>
    <property type="project" value="CAFA"/>
</dbReference>
<dbReference type="GO" id="GO:0005576">
    <property type="term" value="C:extracellular region"/>
    <property type="evidence" value="ECO:0007669"/>
    <property type="project" value="UniProtKB-SubCell"/>
</dbReference>
<dbReference type="GO" id="GO:0016020">
    <property type="term" value="C:membrane"/>
    <property type="evidence" value="ECO:0000314"/>
    <property type="project" value="CAFA"/>
</dbReference>
<dbReference type="GO" id="GO:0000015">
    <property type="term" value="C:phosphopyruvate hydratase complex"/>
    <property type="evidence" value="ECO:0007669"/>
    <property type="project" value="InterPro"/>
</dbReference>
<dbReference type="GO" id="GO:0000287">
    <property type="term" value="F:magnesium ion binding"/>
    <property type="evidence" value="ECO:0007669"/>
    <property type="project" value="UniProtKB-UniRule"/>
</dbReference>
<dbReference type="GO" id="GO:0004634">
    <property type="term" value="F:phosphopyruvate hydratase activity"/>
    <property type="evidence" value="ECO:0000314"/>
    <property type="project" value="CAFA"/>
</dbReference>
<dbReference type="GO" id="GO:0006094">
    <property type="term" value="P:gluconeogenesis"/>
    <property type="evidence" value="ECO:0000314"/>
    <property type="project" value="CAFA"/>
</dbReference>
<dbReference type="GO" id="GO:0006096">
    <property type="term" value="P:glycolytic process"/>
    <property type="evidence" value="ECO:0000314"/>
    <property type="project" value="CAFA"/>
</dbReference>
<dbReference type="GO" id="GO:0044409">
    <property type="term" value="P:symbiont entry into host"/>
    <property type="evidence" value="ECO:0000314"/>
    <property type="project" value="CAFA"/>
</dbReference>
<dbReference type="GO" id="GO:0042783">
    <property type="term" value="P:symbiont-mediated evasion of host immune response"/>
    <property type="evidence" value="ECO:0000314"/>
    <property type="project" value="CAFA"/>
</dbReference>
<dbReference type="CDD" id="cd03313">
    <property type="entry name" value="enolase"/>
    <property type="match status" value="1"/>
</dbReference>
<dbReference type="FunFam" id="3.20.20.120:FF:000001">
    <property type="entry name" value="Enolase"/>
    <property type="match status" value="1"/>
</dbReference>
<dbReference type="FunFam" id="3.30.390.10:FF:000001">
    <property type="entry name" value="Enolase"/>
    <property type="match status" value="1"/>
</dbReference>
<dbReference type="Gene3D" id="3.20.20.120">
    <property type="entry name" value="Enolase-like C-terminal domain"/>
    <property type="match status" value="1"/>
</dbReference>
<dbReference type="Gene3D" id="3.30.390.10">
    <property type="entry name" value="Enolase-like, N-terminal domain"/>
    <property type="match status" value="1"/>
</dbReference>
<dbReference type="HAMAP" id="MF_00318">
    <property type="entry name" value="Enolase"/>
    <property type="match status" value="1"/>
</dbReference>
<dbReference type="InterPro" id="IPR000941">
    <property type="entry name" value="Enolase"/>
</dbReference>
<dbReference type="InterPro" id="IPR036849">
    <property type="entry name" value="Enolase-like_C_sf"/>
</dbReference>
<dbReference type="InterPro" id="IPR029017">
    <property type="entry name" value="Enolase-like_N"/>
</dbReference>
<dbReference type="InterPro" id="IPR020810">
    <property type="entry name" value="Enolase_C"/>
</dbReference>
<dbReference type="InterPro" id="IPR020809">
    <property type="entry name" value="Enolase_CS"/>
</dbReference>
<dbReference type="InterPro" id="IPR020811">
    <property type="entry name" value="Enolase_N"/>
</dbReference>
<dbReference type="NCBIfam" id="TIGR01060">
    <property type="entry name" value="eno"/>
    <property type="match status" value="1"/>
</dbReference>
<dbReference type="PANTHER" id="PTHR11902">
    <property type="entry name" value="ENOLASE"/>
    <property type="match status" value="1"/>
</dbReference>
<dbReference type="PANTHER" id="PTHR11902:SF1">
    <property type="entry name" value="ENOLASE"/>
    <property type="match status" value="1"/>
</dbReference>
<dbReference type="Pfam" id="PF00113">
    <property type="entry name" value="Enolase_C"/>
    <property type="match status" value="1"/>
</dbReference>
<dbReference type="Pfam" id="PF03952">
    <property type="entry name" value="Enolase_N"/>
    <property type="match status" value="1"/>
</dbReference>
<dbReference type="PIRSF" id="PIRSF001400">
    <property type="entry name" value="Enolase"/>
    <property type="match status" value="1"/>
</dbReference>
<dbReference type="PRINTS" id="PR00148">
    <property type="entry name" value="ENOLASE"/>
</dbReference>
<dbReference type="SFLD" id="SFLDS00001">
    <property type="entry name" value="Enolase"/>
    <property type="match status" value="1"/>
</dbReference>
<dbReference type="SFLD" id="SFLDF00002">
    <property type="entry name" value="enolase"/>
    <property type="match status" value="1"/>
</dbReference>
<dbReference type="SMART" id="SM01192">
    <property type="entry name" value="Enolase_C"/>
    <property type="match status" value="1"/>
</dbReference>
<dbReference type="SMART" id="SM01193">
    <property type="entry name" value="Enolase_N"/>
    <property type="match status" value="1"/>
</dbReference>
<dbReference type="SUPFAM" id="SSF51604">
    <property type="entry name" value="Enolase C-terminal domain-like"/>
    <property type="match status" value="1"/>
</dbReference>
<dbReference type="SUPFAM" id="SSF54826">
    <property type="entry name" value="Enolase N-terminal domain-like"/>
    <property type="match status" value="1"/>
</dbReference>
<dbReference type="PROSITE" id="PS00164">
    <property type="entry name" value="ENOLASE"/>
    <property type="match status" value="1"/>
</dbReference>
<keyword id="KW-0963">Cytoplasm</keyword>
<keyword id="KW-0324">Glycolysis</keyword>
<keyword id="KW-0456">Lyase</keyword>
<keyword id="KW-0460">Magnesium</keyword>
<keyword id="KW-0479">Metal-binding</keyword>
<keyword id="KW-1185">Reference proteome</keyword>
<keyword id="KW-0964">Secreted</keyword>
<protein>
    <recommendedName>
        <fullName evidence="1">Enolase</fullName>
        <ecNumber evidence="1">4.2.1.11</ecNumber>
    </recommendedName>
    <alternativeName>
        <fullName evidence="1">2-phospho-D-glycerate hydro-lyase</fullName>
    </alternativeName>
    <alternativeName>
        <fullName evidence="1">2-phosphoglycerate dehydratase</fullName>
    </alternativeName>
</protein>
<sequence>MGFHIYEIKARQIIDSRGNPTVEADVILEDGTYGRAAVPSGASTGINEAVELRDGDKSVYMGKGVLKAIENIKNIIAPELEGMSALNQVAIDRKMLELDGTPTKEKLGANAILAVSMATAKAAAKYLGLRPYQYLGAYKANILPTPMCNIINGGAHSDNSVDFQEFMIMPIGAKTFSEAIRMAAEVFHTLKGILSGKGYATSVGDEGGFAPNLKSNEEACEVIIEAIKKAGYEPGKDIAIALDPATSELYDPKTKKYVLKWSTKEKLTSEQMVEYWAKWVEKYPIISIEDGMAEEDWDGWKKLTDKIGNKIQLVGDDLFVTNTSFLKKGIEMGVANSILIKVNQIGTLTETFEAVEMAKKAGYTAIVSHRSGETEDTTIADLVVALGTGQIKTGSLSRTDRIAKYNQLIRIEEELETTAEYHGKSVFYSIKQK</sequence>
<proteinExistence type="inferred from homology"/>
<comment type="function">
    <text evidence="1">Catalyzes the reversible conversion of 2-phosphoglycerate (2-PG) into phosphoenolpyruvate (PEP). It is essential for the degradation of carbohydrates via glycolysis.</text>
</comment>
<comment type="catalytic activity">
    <reaction evidence="1">
        <text>(2R)-2-phosphoglycerate = phosphoenolpyruvate + H2O</text>
        <dbReference type="Rhea" id="RHEA:10164"/>
        <dbReference type="ChEBI" id="CHEBI:15377"/>
        <dbReference type="ChEBI" id="CHEBI:58289"/>
        <dbReference type="ChEBI" id="CHEBI:58702"/>
        <dbReference type="EC" id="4.2.1.11"/>
    </reaction>
</comment>
<comment type="cofactor">
    <cofactor evidence="1">
        <name>Mg(2+)</name>
        <dbReference type="ChEBI" id="CHEBI:18420"/>
    </cofactor>
    <text evidence="1">Binds a second Mg(2+) ion via substrate during catalysis.</text>
</comment>
<comment type="pathway">
    <text evidence="1">Carbohydrate degradation; glycolysis; pyruvate from D-glyceraldehyde 3-phosphate: step 4/5.</text>
</comment>
<comment type="subcellular location">
    <subcellularLocation>
        <location evidence="1">Cytoplasm</location>
    </subcellularLocation>
    <subcellularLocation>
        <location evidence="1">Secreted</location>
    </subcellularLocation>
    <subcellularLocation>
        <location evidence="1">Cell surface</location>
    </subcellularLocation>
    <text evidence="1">Fractions of enolase are present in both the cytoplasm and on the cell surface.</text>
</comment>
<comment type="similarity">
    <text evidence="1">Belongs to the enolase family.</text>
</comment>
<evidence type="ECO:0000255" key="1">
    <source>
        <dbReference type="HAMAP-Rule" id="MF_00318"/>
    </source>
</evidence>
<evidence type="ECO:0000305" key="2"/>
<reference key="1">
    <citation type="journal article" date="1997" name="Nature">
        <title>Genomic sequence of a Lyme disease spirochaete, Borrelia burgdorferi.</title>
        <authorList>
            <person name="Fraser C.M."/>
            <person name="Casjens S."/>
            <person name="Huang W.M."/>
            <person name="Sutton G.G."/>
            <person name="Clayton R.A."/>
            <person name="Lathigra R."/>
            <person name="White O."/>
            <person name="Ketchum K.A."/>
            <person name="Dodson R.J."/>
            <person name="Hickey E.K."/>
            <person name="Gwinn M.L."/>
            <person name="Dougherty B.A."/>
            <person name="Tomb J.-F."/>
            <person name="Fleischmann R.D."/>
            <person name="Richardson D.L."/>
            <person name="Peterson J.D."/>
            <person name="Kerlavage A.R."/>
            <person name="Quackenbush J."/>
            <person name="Salzberg S.L."/>
            <person name="Hanson M."/>
            <person name="van Vugt R."/>
            <person name="Palmer N."/>
            <person name="Adams M.D."/>
            <person name="Gocayne J.D."/>
            <person name="Weidman J.F."/>
            <person name="Utterback T.R."/>
            <person name="Watthey L."/>
            <person name="McDonald L.A."/>
            <person name="Artiach P."/>
            <person name="Bowman C."/>
            <person name="Garland S.A."/>
            <person name="Fujii C."/>
            <person name="Cotton M.D."/>
            <person name="Horst K."/>
            <person name="Roberts K.M."/>
            <person name="Hatch B."/>
            <person name="Smith H.O."/>
            <person name="Venter J.C."/>
        </authorList>
    </citation>
    <scope>NUCLEOTIDE SEQUENCE [LARGE SCALE GENOMIC DNA]</scope>
    <source>
        <strain>ATCC 35210 / DSM 4680 / CIP 102532 / B31</strain>
    </source>
</reference>
<reference key="2">
    <citation type="journal article" date="1998" name="Microbiology">
        <title>Oligopeptide permease in Borrelia burgdorferi: putative peptide-binding components encoded by both chromosomal and plasmid loci.</title>
        <authorList>
            <person name="Bono J.L."/>
            <person name="Tilly K."/>
            <person name="Stevenson B."/>
            <person name="Hogan D."/>
            <person name="Rosa P."/>
        </authorList>
    </citation>
    <scope>NUCLEOTIDE SEQUENCE [GENOMIC DNA]</scope>
    <source>
        <strain>ATCC 35210 / DSM 4680 / CIP 102532 / B31</strain>
    </source>
</reference>
<accession>O51312</accession>
<accession>O31312</accession>
<name>ENO_BORBU</name>